<accession>P80351</accession>
<organism>
    <name type="scientific">Capparis masaikai</name>
    <name type="common">Mabinlang</name>
    <dbReference type="NCBI Taxonomy" id="13395"/>
    <lineage>
        <taxon>Eukaryota</taxon>
        <taxon>Viridiplantae</taxon>
        <taxon>Streptophyta</taxon>
        <taxon>Embryophyta</taxon>
        <taxon>Tracheophyta</taxon>
        <taxon>Spermatophyta</taxon>
        <taxon>Magnoliopsida</taxon>
        <taxon>eudicotyledons</taxon>
        <taxon>Gunneridae</taxon>
        <taxon>Pentapetalae</taxon>
        <taxon>rosids</taxon>
        <taxon>malvids</taxon>
        <taxon>Brassicales</taxon>
        <taxon>Capparaceae</taxon>
        <taxon>Capparis</taxon>
    </lineage>
</organism>
<evidence type="ECO:0000269" key="1">
    <source>
    </source>
</evidence>
<evidence type="ECO:0000305" key="2"/>
<keyword id="KW-0903">Direct protein sequencing</keyword>
<keyword id="KW-1015">Disulfide bond</keyword>
<keyword id="KW-0708">Seed storage protein</keyword>
<keyword id="KW-0758">Storage protein</keyword>
<keyword id="KW-0776">Taste-modifying protein</keyword>
<comment type="function">
    <text>2S seed storage protein having sweetness-inducing activity. This form is not heat stable.</text>
</comment>
<comment type="subunit">
    <text>Heterodimer of a small A and a large B chain linked by disulfide bonds.</text>
</comment>
<comment type="similarity">
    <text evidence="2">Belongs to the 2S seed storage albumins family.</text>
</comment>
<feature type="chain" id="PRO_0000032135" description="Sweet protein mabinlin-1 chain A">
    <location>
        <begin position="1"/>
        <end position="32"/>
    </location>
</feature>
<feature type="chain" id="PRO_0000032136" description="Sweet protein mabinlin-1 chain B">
    <location>
        <begin position="33"/>
        <end position="104"/>
    </location>
</feature>
<feature type="disulfide bond" evidence="1">
    <location>
        <begin position="4"/>
        <end position="53"/>
    </location>
</feature>
<feature type="disulfide bond" evidence="1">
    <location>
        <begin position="17"/>
        <end position="42"/>
    </location>
</feature>
<feature type="disulfide bond" evidence="1">
    <location>
        <begin position="43"/>
        <end position="91"/>
    </location>
</feature>
<feature type="disulfide bond" evidence="1">
    <location>
        <begin position="55"/>
        <end position="99"/>
    </location>
</feature>
<feature type="non-consecutive residues" evidence="2">
    <location>
        <begin position="32"/>
        <end position="33"/>
    </location>
</feature>
<dbReference type="PIR" id="S48176">
    <property type="entry name" value="S48176"/>
</dbReference>
<dbReference type="SMR" id="P80351"/>
<dbReference type="GO" id="GO:0045735">
    <property type="term" value="F:nutrient reservoir activity"/>
    <property type="evidence" value="ECO:0007669"/>
    <property type="project" value="UniProtKB-KW"/>
</dbReference>
<dbReference type="CDD" id="cd00261">
    <property type="entry name" value="AAI_SS"/>
    <property type="match status" value="1"/>
</dbReference>
<dbReference type="Gene3D" id="1.10.110.10">
    <property type="entry name" value="Plant lipid-transfer and hydrophobic proteins"/>
    <property type="match status" value="1"/>
</dbReference>
<dbReference type="InterPro" id="IPR036312">
    <property type="entry name" value="Bifun_inhib/LTP/seed_sf"/>
</dbReference>
<dbReference type="InterPro" id="IPR016140">
    <property type="entry name" value="Bifunc_inhib/LTP/seed_store"/>
</dbReference>
<dbReference type="InterPro" id="IPR000617">
    <property type="entry name" value="Napin/2SS/CON"/>
</dbReference>
<dbReference type="PANTHER" id="PTHR35496">
    <property type="entry name" value="2S SEED STORAGE PROTEIN 1-RELATED"/>
    <property type="match status" value="1"/>
</dbReference>
<dbReference type="PANTHER" id="PTHR35496:SF20">
    <property type="entry name" value="2S SEED STORAGE PROTEIN 1-RELATED"/>
    <property type="match status" value="1"/>
</dbReference>
<dbReference type="Pfam" id="PF00234">
    <property type="entry name" value="Tryp_alpha_amyl"/>
    <property type="match status" value="1"/>
</dbReference>
<dbReference type="PRINTS" id="PR00496">
    <property type="entry name" value="NAPIN"/>
</dbReference>
<dbReference type="SMART" id="SM00499">
    <property type="entry name" value="AAI"/>
    <property type="match status" value="1"/>
</dbReference>
<dbReference type="SUPFAM" id="SSF47699">
    <property type="entry name" value="Bifunctional inhibitor/lipid-transfer protein/seed storage 2S albumin"/>
    <property type="match status" value="1"/>
</dbReference>
<name>2SS1_CAPMA</name>
<sequence>EPLCRRQFQQHQHLRACQRYIRRRAQRGGLVDEQRGPALRLCCNQLRQVNKPCVCPVLRQAAHQQLYQGQIEGPRQVRQLFRAARNLPNICKIPAVGRCQFTRW</sequence>
<proteinExistence type="evidence at protein level"/>
<protein>
    <recommendedName>
        <fullName>Sweet protein mabinlin-1</fullName>
    </recommendedName>
    <alternativeName>
        <fullName>Mabinlin I</fullName>
        <shortName>MAB I</shortName>
    </alternativeName>
    <component>
        <recommendedName>
            <fullName>Sweet protein mabinlin-1 chain A</fullName>
        </recommendedName>
    </component>
    <component>
        <recommendedName>
            <fullName>Sweet protein mabinlin-1 chain B</fullName>
        </recommendedName>
    </component>
</protein>
<reference key="1">
    <citation type="journal article" date="1994" name="Eur. J. Biochem.">
        <title>Structures of heat-stable and unstable homologues of the sweet protein mabinlin. The difference in the heat stability is due to replacement of a single amino acid residue.</title>
        <authorList>
            <person name="Nirasawa S."/>
            <person name="Nishino T."/>
            <person name="Katahira M."/>
            <person name="Uesugi S."/>
            <person name="Hu Z."/>
            <person name="Kurihara Y."/>
        </authorList>
    </citation>
    <scope>PROTEIN SEQUENCE</scope>
    <source>
        <tissue>Seed</tissue>
    </source>
</reference>